<name>SPEB_ECOL6</name>
<comment type="function">
    <text evidence="1">Catalyzes the formation of putrescine from agmatine.</text>
</comment>
<comment type="catalytic activity">
    <reaction evidence="1">
        <text>agmatine + H2O = urea + putrescine</text>
        <dbReference type="Rhea" id="RHEA:13929"/>
        <dbReference type="ChEBI" id="CHEBI:15377"/>
        <dbReference type="ChEBI" id="CHEBI:16199"/>
        <dbReference type="ChEBI" id="CHEBI:58145"/>
        <dbReference type="ChEBI" id="CHEBI:326268"/>
        <dbReference type="EC" id="3.5.3.11"/>
    </reaction>
</comment>
<comment type="cofactor">
    <cofactor evidence="1">
        <name>Mn(2+)</name>
        <dbReference type="ChEBI" id="CHEBI:29035"/>
    </cofactor>
</comment>
<comment type="pathway">
    <text evidence="1">Amine and polyamine biosynthesis; putrescine biosynthesis via agmatine pathway; putrescine from agmatine: step 1/1.</text>
</comment>
<comment type="similarity">
    <text evidence="1">Belongs to the arginase family. Agmatinase subfamily.</text>
</comment>
<proteinExistence type="inferred from homology"/>
<accession>Q8FE36</accession>
<dbReference type="EC" id="3.5.3.11" evidence="1"/>
<dbReference type="EMBL" id="AE014075">
    <property type="protein sequence ID" value="AAN81970.1"/>
    <property type="molecule type" value="Genomic_DNA"/>
</dbReference>
<dbReference type="RefSeq" id="WP_000105562.1">
    <property type="nucleotide sequence ID" value="NZ_CP051263.1"/>
</dbReference>
<dbReference type="SMR" id="Q8FE36"/>
<dbReference type="STRING" id="199310.c3522"/>
<dbReference type="KEGG" id="ecc:c3522"/>
<dbReference type="eggNOG" id="COG0010">
    <property type="taxonomic scope" value="Bacteria"/>
</dbReference>
<dbReference type="HOGENOM" id="CLU_039478_0_0_6"/>
<dbReference type="BioCyc" id="ECOL199310:C3522-MONOMER"/>
<dbReference type="UniPathway" id="UPA00534">
    <property type="reaction ID" value="UER00287"/>
</dbReference>
<dbReference type="Proteomes" id="UP000001410">
    <property type="component" value="Chromosome"/>
</dbReference>
<dbReference type="GO" id="GO:0008783">
    <property type="term" value="F:agmatinase activity"/>
    <property type="evidence" value="ECO:0007669"/>
    <property type="project" value="UniProtKB-UniRule"/>
</dbReference>
<dbReference type="GO" id="GO:0030145">
    <property type="term" value="F:manganese ion binding"/>
    <property type="evidence" value="ECO:0007669"/>
    <property type="project" value="InterPro"/>
</dbReference>
<dbReference type="GO" id="GO:0033389">
    <property type="term" value="P:putrescine biosynthetic process from arginine, via agmatine"/>
    <property type="evidence" value="ECO:0007669"/>
    <property type="project" value="TreeGrafter"/>
</dbReference>
<dbReference type="GO" id="GO:0008295">
    <property type="term" value="P:spermidine biosynthetic process"/>
    <property type="evidence" value="ECO:0007669"/>
    <property type="project" value="UniProtKB-UniRule"/>
</dbReference>
<dbReference type="CDD" id="cd11592">
    <property type="entry name" value="Agmatinase_PAH"/>
    <property type="match status" value="1"/>
</dbReference>
<dbReference type="FunFam" id="3.40.800.10:FF:000001">
    <property type="entry name" value="Agmatinase"/>
    <property type="match status" value="1"/>
</dbReference>
<dbReference type="Gene3D" id="3.40.800.10">
    <property type="entry name" value="Ureohydrolase domain"/>
    <property type="match status" value="1"/>
</dbReference>
<dbReference type="HAMAP" id="MF_01418">
    <property type="entry name" value="SpeB"/>
    <property type="match status" value="1"/>
</dbReference>
<dbReference type="InterPro" id="IPR023694">
    <property type="entry name" value="Agmatinase"/>
</dbReference>
<dbReference type="InterPro" id="IPR005925">
    <property type="entry name" value="Agmatinase-rel"/>
</dbReference>
<dbReference type="InterPro" id="IPR006035">
    <property type="entry name" value="Ureohydrolase"/>
</dbReference>
<dbReference type="InterPro" id="IPR023696">
    <property type="entry name" value="Ureohydrolase_dom_sf"/>
</dbReference>
<dbReference type="InterPro" id="IPR020855">
    <property type="entry name" value="Ureohydrolase_Mn_BS"/>
</dbReference>
<dbReference type="NCBIfam" id="TIGR01230">
    <property type="entry name" value="agmatinase"/>
    <property type="match status" value="1"/>
</dbReference>
<dbReference type="NCBIfam" id="NF002564">
    <property type="entry name" value="PRK02190.1"/>
    <property type="match status" value="1"/>
</dbReference>
<dbReference type="PANTHER" id="PTHR11358">
    <property type="entry name" value="ARGINASE/AGMATINASE"/>
    <property type="match status" value="1"/>
</dbReference>
<dbReference type="PANTHER" id="PTHR11358:SF26">
    <property type="entry name" value="GUANIDINO ACID HYDROLASE, MITOCHONDRIAL"/>
    <property type="match status" value="1"/>
</dbReference>
<dbReference type="Pfam" id="PF00491">
    <property type="entry name" value="Arginase"/>
    <property type="match status" value="1"/>
</dbReference>
<dbReference type="PIRSF" id="PIRSF036979">
    <property type="entry name" value="Arginase"/>
    <property type="match status" value="1"/>
</dbReference>
<dbReference type="SUPFAM" id="SSF52768">
    <property type="entry name" value="Arginase/deacetylase"/>
    <property type="match status" value="1"/>
</dbReference>
<dbReference type="PROSITE" id="PS01053">
    <property type="entry name" value="ARGINASE_1"/>
    <property type="match status" value="1"/>
</dbReference>
<dbReference type="PROSITE" id="PS51409">
    <property type="entry name" value="ARGINASE_2"/>
    <property type="match status" value="1"/>
</dbReference>
<feature type="chain" id="PRO_0000173733" description="Agmatinase">
    <location>
        <begin position="1"/>
        <end position="306"/>
    </location>
</feature>
<feature type="binding site" evidence="1">
    <location>
        <position position="126"/>
    </location>
    <ligand>
        <name>Mn(2+)</name>
        <dbReference type="ChEBI" id="CHEBI:29035"/>
    </ligand>
</feature>
<feature type="binding site" evidence="1">
    <location>
        <position position="149"/>
    </location>
    <ligand>
        <name>Mn(2+)</name>
        <dbReference type="ChEBI" id="CHEBI:29035"/>
    </ligand>
</feature>
<feature type="binding site" evidence="1">
    <location>
        <position position="151"/>
    </location>
    <ligand>
        <name>Mn(2+)</name>
        <dbReference type="ChEBI" id="CHEBI:29035"/>
    </ligand>
</feature>
<feature type="binding site" evidence="1">
    <location>
        <position position="153"/>
    </location>
    <ligand>
        <name>Mn(2+)</name>
        <dbReference type="ChEBI" id="CHEBI:29035"/>
    </ligand>
</feature>
<feature type="binding site" evidence="1">
    <location>
        <position position="230"/>
    </location>
    <ligand>
        <name>Mn(2+)</name>
        <dbReference type="ChEBI" id="CHEBI:29035"/>
    </ligand>
</feature>
<feature type="binding site" evidence="1">
    <location>
        <position position="232"/>
    </location>
    <ligand>
        <name>Mn(2+)</name>
        <dbReference type="ChEBI" id="CHEBI:29035"/>
    </ligand>
</feature>
<sequence length="306" mass="33571">MSTLGHQYDNSLVSNAFGFLRLPMNFQPYDSDADWVITGVPFDMATSGRAGGRHGPAAIRQVSTNLAWEHNRFPWNFDMRERLNVVDCGDLVYAFGDAREMSEKLQAHAEKLLAAGKRMLSFGGDHFVTLPLLRAHAKHFGKMALVHFDAHTDTYANGCEFDHGTMFYTAPKEGLIDPNHSVQIGIRTEFDKDNGFTVLDACQVNDRSVDDIIAQVKQIVGDMPVYLTFDIDCLDPAFAPGTGTPVIGGLTSDRAIKLVRGLKDLNIVGMDVVEVAPAYDQSEITALAAATLALEMLYIQAAKKGE</sequence>
<evidence type="ECO:0000255" key="1">
    <source>
        <dbReference type="HAMAP-Rule" id="MF_01418"/>
    </source>
</evidence>
<keyword id="KW-0378">Hydrolase</keyword>
<keyword id="KW-0464">Manganese</keyword>
<keyword id="KW-0479">Metal-binding</keyword>
<keyword id="KW-0620">Polyamine biosynthesis</keyword>
<keyword id="KW-0661">Putrescine biosynthesis</keyword>
<keyword id="KW-1185">Reference proteome</keyword>
<keyword id="KW-0745">Spermidine biosynthesis</keyword>
<organism>
    <name type="scientific">Escherichia coli O6:H1 (strain CFT073 / ATCC 700928 / UPEC)</name>
    <dbReference type="NCBI Taxonomy" id="199310"/>
    <lineage>
        <taxon>Bacteria</taxon>
        <taxon>Pseudomonadati</taxon>
        <taxon>Pseudomonadota</taxon>
        <taxon>Gammaproteobacteria</taxon>
        <taxon>Enterobacterales</taxon>
        <taxon>Enterobacteriaceae</taxon>
        <taxon>Escherichia</taxon>
    </lineage>
</organism>
<protein>
    <recommendedName>
        <fullName evidence="1">Agmatinase</fullName>
        <ecNumber evidence="1">3.5.3.11</ecNumber>
    </recommendedName>
    <alternativeName>
        <fullName evidence="1">Agmatine ureohydrolase</fullName>
        <shortName evidence="1">AUH</shortName>
    </alternativeName>
</protein>
<reference key="1">
    <citation type="journal article" date="2002" name="Proc. Natl. Acad. Sci. U.S.A.">
        <title>Extensive mosaic structure revealed by the complete genome sequence of uropathogenic Escherichia coli.</title>
        <authorList>
            <person name="Welch R.A."/>
            <person name="Burland V."/>
            <person name="Plunkett G. III"/>
            <person name="Redford P."/>
            <person name="Roesch P."/>
            <person name="Rasko D."/>
            <person name="Buckles E.L."/>
            <person name="Liou S.-R."/>
            <person name="Boutin A."/>
            <person name="Hackett J."/>
            <person name="Stroud D."/>
            <person name="Mayhew G.F."/>
            <person name="Rose D.J."/>
            <person name="Zhou S."/>
            <person name="Schwartz D.C."/>
            <person name="Perna N.T."/>
            <person name="Mobley H.L.T."/>
            <person name="Donnenberg M.S."/>
            <person name="Blattner F.R."/>
        </authorList>
    </citation>
    <scope>NUCLEOTIDE SEQUENCE [LARGE SCALE GENOMIC DNA]</scope>
    <source>
        <strain>CFT073 / ATCC 700928 / UPEC</strain>
    </source>
</reference>
<gene>
    <name evidence="1" type="primary">speB</name>
    <name type="ordered locus">c3522</name>
</gene>